<proteinExistence type="inferred from homology"/>
<feature type="chain" id="PRO_0000352638" description="D-galactonate dehydratase">
    <location>
        <begin position="1"/>
        <end position="382"/>
    </location>
</feature>
<feature type="region of interest" description="Disordered" evidence="3">
    <location>
        <begin position="361"/>
        <end position="382"/>
    </location>
</feature>
<feature type="active site" description="Proton donor" evidence="1">
    <location>
        <position position="185"/>
    </location>
</feature>
<feature type="active site" description="Proton acceptor" evidence="1">
    <location>
        <position position="285"/>
    </location>
</feature>
<feature type="binding site" evidence="2">
    <location>
        <position position="183"/>
    </location>
    <ligand>
        <name>Mg(2+)</name>
        <dbReference type="ChEBI" id="CHEBI:18420"/>
    </ligand>
</feature>
<feature type="binding site" evidence="2">
    <location>
        <position position="209"/>
    </location>
    <ligand>
        <name>Mg(2+)</name>
        <dbReference type="ChEBI" id="CHEBI:18420"/>
    </ligand>
</feature>
<feature type="binding site" evidence="2">
    <location>
        <position position="235"/>
    </location>
    <ligand>
        <name>Mg(2+)</name>
        <dbReference type="ChEBI" id="CHEBI:18420"/>
    </ligand>
</feature>
<feature type="site" description="Increases basicity of active site His" evidence="2">
    <location>
        <position position="258"/>
    </location>
</feature>
<feature type="site" description="Transition state stabilizer" evidence="2">
    <location>
        <position position="310"/>
    </location>
</feature>
<reference key="1">
    <citation type="journal article" date="2002" name="Nature">
        <title>Comparison of the genomes of two Xanthomonas pathogens with differing host specificities.</title>
        <authorList>
            <person name="da Silva A.C.R."/>
            <person name="Ferro J.A."/>
            <person name="Reinach F.C."/>
            <person name="Farah C.S."/>
            <person name="Furlan L.R."/>
            <person name="Quaggio R.B."/>
            <person name="Monteiro-Vitorello C.B."/>
            <person name="Van Sluys M.A."/>
            <person name="Almeida N.F. Jr."/>
            <person name="Alves L.M.C."/>
            <person name="do Amaral A.M."/>
            <person name="Bertolini M.C."/>
            <person name="Camargo L.E.A."/>
            <person name="Camarotte G."/>
            <person name="Cannavan F."/>
            <person name="Cardozo J."/>
            <person name="Chambergo F."/>
            <person name="Ciapina L.P."/>
            <person name="Cicarelli R.M.B."/>
            <person name="Coutinho L.L."/>
            <person name="Cursino-Santos J.R."/>
            <person name="El-Dorry H."/>
            <person name="Faria J.B."/>
            <person name="Ferreira A.J.S."/>
            <person name="Ferreira R.C.C."/>
            <person name="Ferro M.I.T."/>
            <person name="Formighieri E.F."/>
            <person name="Franco M.C."/>
            <person name="Greggio C.C."/>
            <person name="Gruber A."/>
            <person name="Katsuyama A.M."/>
            <person name="Kishi L.T."/>
            <person name="Leite R.P."/>
            <person name="Lemos E.G.M."/>
            <person name="Lemos M.V.F."/>
            <person name="Locali E.C."/>
            <person name="Machado M.A."/>
            <person name="Madeira A.M.B.N."/>
            <person name="Martinez-Rossi N.M."/>
            <person name="Martins E.C."/>
            <person name="Meidanis J."/>
            <person name="Menck C.F.M."/>
            <person name="Miyaki C.Y."/>
            <person name="Moon D.H."/>
            <person name="Moreira L.M."/>
            <person name="Novo M.T.M."/>
            <person name="Okura V.K."/>
            <person name="Oliveira M.C."/>
            <person name="Oliveira V.R."/>
            <person name="Pereira H.A."/>
            <person name="Rossi A."/>
            <person name="Sena J.A.D."/>
            <person name="Silva C."/>
            <person name="de Souza R.F."/>
            <person name="Spinola L.A.F."/>
            <person name="Takita M.A."/>
            <person name="Tamura R.E."/>
            <person name="Teixeira E.C."/>
            <person name="Tezza R.I.D."/>
            <person name="Trindade dos Santos M."/>
            <person name="Truffi D."/>
            <person name="Tsai S.M."/>
            <person name="White F.F."/>
            <person name="Setubal J.C."/>
            <person name="Kitajima J.P."/>
        </authorList>
    </citation>
    <scope>NUCLEOTIDE SEQUENCE [LARGE SCALE GENOMIC DNA]</scope>
    <source>
        <strain>306</strain>
    </source>
</reference>
<accession>Q8PLN0</accession>
<keyword id="KW-0456">Lyase</keyword>
<keyword id="KW-0460">Magnesium</keyword>
<keyword id="KW-0479">Metal-binding</keyword>
<comment type="function">
    <text evidence="2">Catalyzes the dehydration of D-galactonate to 2-keto-3-deoxy-D-galactonate.</text>
</comment>
<comment type="catalytic activity">
    <reaction evidence="2">
        <text>D-galactonate = 2-dehydro-3-deoxy-D-galactonate + H2O</text>
        <dbReference type="Rhea" id="RHEA:18649"/>
        <dbReference type="ChEBI" id="CHEBI:12931"/>
        <dbReference type="ChEBI" id="CHEBI:15377"/>
        <dbReference type="ChEBI" id="CHEBI:57989"/>
        <dbReference type="EC" id="4.2.1.6"/>
    </reaction>
</comment>
<comment type="cofactor">
    <cofactor evidence="2">
        <name>Mg(2+)</name>
        <dbReference type="ChEBI" id="CHEBI:18420"/>
    </cofactor>
    <text evidence="2">Binds 1 Mg(2+) ion per subunit.</text>
</comment>
<comment type="pathway">
    <text evidence="2">Carbohydrate acid metabolism; D-galactonate degradation; D-glyceraldehyde 3-phosphate and pyruvate from D-galactonate: step 1/3.</text>
</comment>
<comment type="miscellaneous">
    <text evidence="2">Reaction proceeds via an anti dehydration.</text>
</comment>
<comment type="similarity">
    <text evidence="2">Belongs to the mandelate racemase/muconate lactonizing enzyme family. GalD subfamily.</text>
</comment>
<name>DGOD_XANAC</name>
<protein>
    <recommendedName>
        <fullName evidence="2">D-galactonate dehydratase</fullName>
        <shortName evidence="2">GalD</shortName>
        <ecNumber evidence="2">4.2.1.6</ecNumber>
    </recommendedName>
</protein>
<gene>
    <name evidence="2" type="primary">dgoD</name>
    <name type="ordered locus">XAC1765</name>
</gene>
<evidence type="ECO:0000250" key="1"/>
<evidence type="ECO:0000255" key="2">
    <source>
        <dbReference type="HAMAP-Rule" id="MF_01289"/>
    </source>
</evidence>
<evidence type="ECO:0000256" key="3">
    <source>
        <dbReference type="SAM" id="MobiDB-lite"/>
    </source>
</evidence>
<sequence>MKITRLTTYHAAPRWLFLKVETDEGITGWGEPVIEGRARSVEAAVHELAGYVVGKDPARINDLWQTLYRAGFYRGGAILMSAIAGIDQALWDIKGKALGVPVYELLGGLVRDRMKTYRWVGGDRPGAIIQQITDYRALGFDTFKFNGTEEMKLIDSARAVDAAVVKVAEIRGAFGNTIDFGIDFHGRVGAPMAKALLRELEPFKPLFVEEPVLAEQAEYYPRLAASTSIPLAAGERMFSRFEFKNVLCAGGIGMVQPDLSHAGGITECVKIAAMAEAYDVGFAPHCPLGPIALAACLHVDFVSHNAVLQEQSIGIHYNEGADLLDYVVNKDDFHCVDGSIAALPKPGLGVEIDEEMLKRANENPPDWRNPVWRHSDGSIAEW</sequence>
<organism>
    <name type="scientific">Xanthomonas axonopodis pv. citri (strain 306)</name>
    <dbReference type="NCBI Taxonomy" id="190486"/>
    <lineage>
        <taxon>Bacteria</taxon>
        <taxon>Pseudomonadati</taxon>
        <taxon>Pseudomonadota</taxon>
        <taxon>Gammaproteobacteria</taxon>
        <taxon>Lysobacterales</taxon>
        <taxon>Lysobacteraceae</taxon>
        <taxon>Xanthomonas</taxon>
    </lineage>
</organism>
<dbReference type="EC" id="4.2.1.6" evidence="2"/>
<dbReference type="EMBL" id="AE008923">
    <property type="protein sequence ID" value="AAM36629.1"/>
    <property type="molecule type" value="Genomic_DNA"/>
</dbReference>
<dbReference type="RefSeq" id="WP_011051125.1">
    <property type="nucleotide sequence ID" value="NC_003919.1"/>
</dbReference>
<dbReference type="SMR" id="Q8PLN0"/>
<dbReference type="GeneID" id="66910914"/>
<dbReference type="KEGG" id="xac:XAC1765"/>
<dbReference type="eggNOG" id="COG4948">
    <property type="taxonomic scope" value="Bacteria"/>
</dbReference>
<dbReference type="HOGENOM" id="CLU_030273_3_2_6"/>
<dbReference type="UniPathway" id="UPA00081">
    <property type="reaction ID" value="UER00518"/>
</dbReference>
<dbReference type="Proteomes" id="UP000000576">
    <property type="component" value="Chromosome"/>
</dbReference>
<dbReference type="GO" id="GO:0008869">
    <property type="term" value="F:galactonate dehydratase activity"/>
    <property type="evidence" value="ECO:0007669"/>
    <property type="project" value="UniProtKB-UniRule"/>
</dbReference>
<dbReference type="GO" id="GO:0000287">
    <property type="term" value="F:magnesium ion binding"/>
    <property type="evidence" value="ECO:0007669"/>
    <property type="project" value="UniProtKB-UniRule"/>
</dbReference>
<dbReference type="GO" id="GO:0009063">
    <property type="term" value="P:amino acid catabolic process"/>
    <property type="evidence" value="ECO:0007669"/>
    <property type="project" value="InterPro"/>
</dbReference>
<dbReference type="GO" id="GO:0034194">
    <property type="term" value="P:D-galactonate catabolic process"/>
    <property type="evidence" value="ECO:0007669"/>
    <property type="project" value="UniProtKB-UniRule"/>
</dbReference>
<dbReference type="CDD" id="cd03325">
    <property type="entry name" value="D-galactonate_dehydratase"/>
    <property type="match status" value="1"/>
</dbReference>
<dbReference type="FunFam" id="3.30.390.10:FF:000003">
    <property type="entry name" value="D-galactonate dehydratase"/>
    <property type="match status" value="1"/>
</dbReference>
<dbReference type="Gene3D" id="3.20.20.120">
    <property type="entry name" value="Enolase-like C-terminal domain"/>
    <property type="match status" value="1"/>
</dbReference>
<dbReference type="Gene3D" id="3.30.390.10">
    <property type="entry name" value="Enolase-like, N-terminal domain"/>
    <property type="match status" value="1"/>
</dbReference>
<dbReference type="HAMAP" id="MF_01289">
    <property type="entry name" value="Galacton_dehydrat"/>
    <property type="match status" value="1"/>
</dbReference>
<dbReference type="InterPro" id="IPR034593">
    <property type="entry name" value="DgoD-like"/>
</dbReference>
<dbReference type="InterPro" id="IPR036849">
    <property type="entry name" value="Enolase-like_C_sf"/>
</dbReference>
<dbReference type="InterPro" id="IPR029017">
    <property type="entry name" value="Enolase-like_N"/>
</dbReference>
<dbReference type="InterPro" id="IPR029065">
    <property type="entry name" value="Enolase_C-like"/>
</dbReference>
<dbReference type="InterPro" id="IPR023592">
    <property type="entry name" value="Galactonate_deHydtase"/>
</dbReference>
<dbReference type="InterPro" id="IPR018110">
    <property type="entry name" value="Mandel_Rmase/mucon_lact_enz_CS"/>
</dbReference>
<dbReference type="InterPro" id="IPR013342">
    <property type="entry name" value="Mandelate_racemase_C"/>
</dbReference>
<dbReference type="InterPro" id="IPR013341">
    <property type="entry name" value="Mandelate_racemase_N_dom"/>
</dbReference>
<dbReference type="NCBIfam" id="NF010624">
    <property type="entry name" value="PRK14017.1"/>
    <property type="match status" value="1"/>
</dbReference>
<dbReference type="PANTHER" id="PTHR48080:SF2">
    <property type="entry name" value="D-GALACTONATE DEHYDRATASE"/>
    <property type="match status" value="1"/>
</dbReference>
<dbReference type="PANTHER" id="PTHR48080">
    <property type="entry name" value="D-GALACTONATE DEHYDRATASE-RELATED"/>
    <property type="match status" value="1"/>
</dbReference>
<dbReference type="Pfam" id="PF13378">
    <property type="entry name" value="MR_MLE_C"/>
    <property type="match status" value="1"/>
</dbReference>
<dbReference type="Pfam" id="PF02746">
    <property type="entry name" value="MR_MLE_N"/>
    <property type="match status" value="1"/>
</dbReference>
<dbReference type="SFLD" id="SFLDF00003">
    <property type="entry name" value="D-galactonate_dehydratase"/>
    <property type="match status" value="1"/>
</dbReference>
<dbReference type="SFLD" id="SFLDS00001">
    <property type="entry name" value="Enolase"/>
    <property type="match status" value="1"/>
</dbReference>
<dbReference type="SMART" id="SM00922">
    <property type="entry name" value="MR_MLE"/>
    <property type="match status" value="1"/>
</dbReference>
<dbReference type="SUPFAM" id="SSF51604">
    <property type="entry name" value="Enolase C-terminal domain-like"/>
    <property type="match status" value="1"/>
</dbReference>
<dbReference type="SUPFAM" id="SSF54826">
    <property type="entry name" value="Enolase N-terminal domain-like"/>
    <property type="match status" value="1"/>
</dbReference>
<dbReference type="PROSITE" id="PS00908">
    <property type="entry name" value="MR_MLE_1"/>
    <property type="match status" value="1"/>
</dbReference>
<dbReference type="PROSITE" id="PS00909">
    <property type="entry name" value="MR_MLE_2"/>
    <property type="match status" value="1"/>
</dbReference>